<organism>
    <name type="scientific">Porphyra purpurea</name>
    <name type="common">Red seaweed</name>
    <name type="synonym">Ulva purpurea</name>
    <dbReference type="NCBI Taxonomy" id="2787"/>
    <lineage>
        <taxon>Eukaryota</taxon>
        <taxon>Rhodophyta</taxon>
        <taxon>Bangiophyceae</taxon>
        <taxon>Bangiales</taxon>
        <taxon>Bangiaceae</taxon>
        <taxon>Porphyra</taxon>
    </lineage>
</organism>
<protein>
    <recommendedName>
        <fullName evidence="1">Small ribosomal subunit protein uS11c</fullName>
    </recommendedName>
    <alternativeName>
        <fullName evidence="2">30S ribosomal protein S11, chloroplastic</fullName>
    </alternativeName>
</protein>
<keyword id="KW-0150">Chloroplast</keyword>
<keyword id="KW-0934">Plastid</keyword>
<keyword id="KW-0687">Ribonucleoprotein</keyword>
<keyword id="KW-0689">Ribosomal protein</keyword>
<keyword id="KW-0694">RNA-binding</keyword>
<keyword id="KW-0699">rRNA-binding</keyword>
<proteinExistence type="inferred from homology"/>
<geneLocation type="chloroplast"/>
<accession>P51294</accession>
<comment type="subunit">
    <text evidence="1">Part of the 30S ribosomal subunit.</text>
</comment>
<comment type="subcellular location">
    <subcellularLocation>
        <location>Plastid</location>
        <location>Chloroplast</location>
    </subcellularLocation>
</comment>
<comment type="similarity">
    <text evidence="1">Belongs to the universal ribosomal protein uS11 family.</text>
</comment>
<reference key="1">
    <citation type="journal article" date="1995" name="Plant Mol. Biol. Rep.">
        <title>Complete nucleotide sequence of the Porphyra purpurea chloroplast genome.</title>
        <authorList>
            <person name="Reith M.E."/>
            <person name="Munholland J."/>
        </authorList>
    </citation>
    <scope>NUCLEOTIDE SEQUENCE [LARGE SCALE GENOMIC DNA]</scope>
    <source>
        <strain>Avonport</strain>
    </source>
</reference>
<evidence type="ECO:0000255" key="1">
    <source>
        <dbReference type="HAMAP-Rule" id="MF_01310"/>
    </source>
</evidence>
<evidence type="ECO:0000305" key="2"/>
<feature type="chain" id="PRO_0000123323" description="Small ribosomal subunit protein uS11c">
    <location>
        <begin position="1"/>
        <end position="130"/>
    </location>
</feature>
<dbReference type="EMBL" id="U38804">
    <property type="protein sequence ID" value="AAC08180.1"/>
    <property type="molecule type" value="Genomic_DNA"/>
</dbReference>
<dbReference type="PIR" id="S73215">
    <property type="entry name" value="S73215"/>
</dbReference>
<dbReference type="RefSeq" id="NP_053904.1">
    <property type="nucleotide sequence ID" value="NC_000925.1"/>
</dbReference>
<dbReference type="SMR" id="P51294"/>
<dbReference type="GeneID" id="809923"/>
<dbReference type="GO" id="GO:0009507">
    <property type="term" value="C:chloroplast"/>
    <property type="evidence" value="ECO:0007669"/>
    <property type="project" value="UniProtKB-SubCell"/>
</dbReference>
<dbReference type="GO" id="GO:1990904">
    <property type="term" value="C:ribonucleoprotein complex"/>
    <property type="evidence" value="ECO:0007669"/>
    <property type="project" value="UniProtKB-KW"/>
</dbReference>
<dbReference type="GO" id="GO:0005840">
    <property type="term" value="C:ribosome"/>
    <property type="evidence" value="ECO:0007669"/>
    <property type="project" value="UniProtKB-KW"/>
</dbReference>
<dbReference type="GO" id="GO:0019843">
    <property type="term" value="F:rRNA binding"/>
    <property type="evidence" value="ECO:0007669"/>
    <property type="project" value="UniProtKB-UniRule"/>
</dbReference>
<dbReference type="GO" id="GO:0003735">
    <property type="term" value="F:structural constituent of ribosome"/>
    <property type="evidence" value="ECO:0007669"/>
    <property type="project" value="InterPro"/>
</dbReference>
<dbReference type="GO" id="GO:0006412">
    <property type="term" value="P:translation"/>
    <property type="evidence" value="ECO:0007669"/>
    <property type="project" value="UniProtKB-UniRule"/>
</dbReference>
<dbReference type="FunFam" id="3.30.420.80:FF:000001">
    <property type="entry name" value="30S ribosomal protein S11"/>
    <property type="match status" value="1"/>
</dbReference>
<dbReference type="Gene3D" id="3.30.420.80">
    <property type="entry name" value="Ribosomal protein S11"/>
    <property type="match status" value="1"/>
</dbReference>
<dbReference type="HAMAP" id="MF_01310">
    <property type="entry name" value="Ribosomal_uS11"/>
    <property type="match status" value="1"/>
</dbReference>
<dbReference type="InterPro" id="IPR001971">
    <property type="entry name" value="Ribosomal_uS11"/>
</dbReference>
<dbReference type="InterPro" id="IPR019981">
    <property type="entry name" value="Ribosomal_uS11_bac-type"/>
</dbReference>
<dbReference type="InterPro" id="IPR018102">
    <property type="entry name" value="Ribosomal_uS11_CS"/>
</dbReference>
<dbReference type="InterPro" id="IPR036967">
    <property type="entry name" value="Ribosomal_uS11_sf"/>
</dbReference>
<dbReference type="NCBIfam" id="NF003698">
    <property type="entry name" value="PRK05309.1"/>
    <property type="match status" value="1"/>
</dbReference>
<dbReference type="NCBIfam" id="TIGR03632">
    <property type="entry name" value="uS11_bact"/>
    <property type="match status" value="1"/>
</dbReference>
<dbReference type="PANTHER" id="PTHR11759">
    <property type="entry name" value="40S RIBOSOMAL PROTEIN S14/30S RIBOSOMAL PROTEIN S11"/>
    <property type="match status" value="1"/>
</dbReference>
<dbReference type="Pfam" id="PF00411">
    <property type="entry name" value="Ribosomal_S11"/>
    <property type="match status" value="1"/>
</dbReference>
<dbReference type="PIRSF" id="PIRSF002131">
    <property type="entry name" value="Ribosomal_S11"/>
    <property type="match status" value="1"/>
</dbReference>
<dbReference type="SUPFAM" id="SSF53137">
    <property type="entry name" value="Translational machinery components"/>
    <property type="match status" value="1"/>
</dbReference>
<dbReference type="PROSITE" id="PS00054">
    <property type="entry name" value="RIBOSOMAL_S11"/>
    <property type="match status" value="1"/>
</dbReference>
<sequence length="130" mass="13803">MARQIKKSGARKNKHNAVNGITHIKSTFNNTIVTITNLKGETLSWSSSGASGFKGAKKGTPFAAQTAAEKAAKQAMDQGMRQTEVLVNGPGAGRETAIRALQAAGLEITLIKDITPVPHNGCRPPKKRRV</sequence>
<gene>
    <name evidence="1" type="primary">rps11</name>
</gene>
<name>RR11_PORPU</name>